<comment type="function">
    <text evidence="1">Part of a sulfur-relay system required for 2-thiolation of 5-methylaminomethyl-2-thiouridine (mnm(5)s(2)U) at tRNA wobble positions.</text>
</comment>
<comment type="subunit">
    <text evidence="1">Heterohexamer, formed by a dimer of trimers. The hexameric TusBCD complex contains 2 copies each of TusB, TusC and TusD. The TusBCD complex interacts with TusE.</text>
</comment>
<comment type="subcellular location">
    <subcellularLocation>
        <location evidence="1">Cytoplasm</location>
    </subcellularLocation>
</comment>
<comment type="similarity">
    <text evidence="1">Belongs to the DsrF/TusC family.</text>
</comment>
<sequence>MKKIAFVFSYVPHGVSLGREGLDLLLSVSIMNSKISVFFIGDGIFQLLKNQKPDEILSKNYVLSFKILPFFGIYDFFLCNESLKERGLFKKTDFLLDVSILSAIEIRNKLKNSDLIINF</sequence>
<reference key="1">
    <citation type="journal article" date="2003" name="Proc. Natl. Acad. Sci. U.S.A.">
        <title>Reductive genome evolution in Buchnera aphidicola.</title>
        <authorList>
            <person name="van Ham R.C.H.J."/>
            <person name="Kamerbeek J."/>
            <person name="Palacios C."/>
            <person name="Rausell C."/>
            <person name="Abascal F."/>
            <person name="Bastolla U."/>
            <person name="Fernandez J.M."/>
            <person name="Jimenez L."/>
            <person name="Postigo M."/>
            <person name="Silva F.J."/>
            <person name="Tamames J."/>
            <person name="Viguera E."/>
            <person name="Latorre A."/>
            <person name="Valencia A."/>
            <person name="Moran F."/>
            <person name="Moya A."/>
        </authorList>
    </citation>
    <scope>NUCLEOTIDE SEQUENCE [LARGE SCALE GENOMIC DNA]</scope>
    <source>
        <strain>Bp</strain>
    </source>
</reference>
<name>TUSC_BUCBP</name>
<feature type="chain" id="PRO_0000214882" description="Protein TusC">
    <location>
        <begin position="1"/>
        <end position="119"/>
    </location>
</feature>
<organism>
    <name type="scientific">Buchnera aphidicola subsp. Baizongia pistaciae (strain Bp)</name>
    <dbReference type="NCBI Taxonomy" id="224915"/>
    <lineage>
        <taxon>Bacteria</taxon>
        <taxon>Pseudomonadati</taxon>
        <taxon>Pseudomonadota</taxon>
        <taxon>Gammaproteobacteria</taxon>
        <taxon>Enterobacterales</taxon>
        <taxon>Erwiniaceae</taxon>
        <taxon>Buchnera</taxon>
    </lineage>
</organism>
<dbReference type="EMBL" id="AE016826">
    <property type="protein sequence ID" value="AAO27180.1"/>
    <property type="molecule type" value="Genomic_DNA"/>
</dbReference>
<dbReference type="RefSeq" id="WP_011091581.1">
    <property type="nucleotide sequence ID" value="NC_004545.1"/>
</dbReference>
<dbReference type="SMR" id="Q89A63"/>
<dbReference type="STRING" id="224915.bbp_474"/>
<dbReference type="KEGG" id="bab:bbp_474"/>
<dbReference type="eggNOG" id="COG2923">
    <property type="taxonomic scope" value="Bacteria"/>
</dbReference>
<dbReference type="HOGENOM" id="CLU_155943_1_0_6"/>
<dbReference type="OrthoDB" id="9789418at2"/>
<dbReference type="Proteomes" id="UP000000601">
    <property type="component" value="Chromosome"/>
</dbReference>
<dbReference type="GO" id="GO:0005737">
    <property type="term" value="C:cytoplasm"/>
    <property type="evidence" value="ECO:0007669"/>
    <property type="project" value="UniProtKB-SubCell"/>
</dbReference>
<dbReference type="GO" id="GO:0008033">
    <property type="term" value="P:tRNA processing"/>
    <property type="evidence" value="ECO:0007669"/>
    <property type="project" value="UniProtKB-UniRule"/>
</dbReference>
<dbReference type="Gene3D" id="3.40.1260.10">
    <property type="entry name" value="DsrEFH-like"/>
    <property type="match status" value="1"/>
</dbReference>
<dbReference type="HAMAP" id="MF_00389">
    <property type="entry name" value="Thiourid_synth_C"/>
    <property type="match status" value="1"/>
</dbReference>
<dbReference type="InterPro" id="IPR027396">
    <property type="entry name" value="DsrEFH-like"/>
</dbReference>
<dbReference type="InterPro" id="IPR003787">
    <property type="entry name" value="Sulphur_relay_DsrE/F-like"/>
</dbReference>
<dbReference type="InterPro" id="IPR037450">
    <property type="entry name" value="Sulphur_relay_TusC"/>
</dbReference>
<dbReference type="InterPro" id="IPR017462">
    <property type="entry name" value="Sulphur_relay_TusC/DsrF"/>
</dbReference>
<dbReference type="NCBIfam" id="NF001238">
    <property type="entry name" value="PRK00211.1"/>
    <property type="match status" value="1"/>
</dbReference>
<dbReference type="NCBIfam" id="TIGR03010">
    <property type="entry name" value="sulf_tusC_dsrF"/>
    <property type="match status" value="1"/>
</dbReference>
<dbReference type="PANTHER" id="PTHR38780">
    <property type="entry name" value="PROTEIN TUSC"/>
    <property type="match status" value="1"/>
</dbReference>
<dbReference type="PANTHER" id="PTHR38780:SF1">
    <property type="entry name" value="PROTEIN TUSC"/>
    <property type="match status" value="1"/>
</dbReference>
<dbReference type="Pfam" id="PF02635">
    <property type="entry name" value="DsrE"/>
    <property type="match status" value="1"/>
</dbReference>
<dbReference type="SUPFAM" id="SSF75169">
    <property type="entry name" value="DsrEFH-like"/>
    <property type="match status" value="1"/>
</dbReference>
<protein>
    <recommendedName>
        <fullName evidence="1">Protein TusC</fullName>
    </recommendedName>
    <alternativeName>
        <fullName evidence="1">tRNA 2-thiouridine synthesizing protein C</fullName>
    </alternativeName>
</protein>
<accession>Q89A63</accession>
<evidence type="ECO:0000255" key="1">
    <source>
        <dbReference type="HAMAP-Rule" id="MF_00389"/>
    </source>
</evidence>
<gene>
    <name evidence="1" type="primary">tusC</name>
    <name type="ordered locus">bbp_474</name>
</gene>
<proteinExistence type="inferred from homology"/>
<keyword id="KW-0963">Cytoplasm</keyword>
<keyword id="KW-1185">Reference proteome</keyword>
<keyword id="KW-0819">tRNA processing</keyword>